<feature type="chain" id="PRO_1000073605" description="Bifunctional protein FolD">
    <location>
        <begin position="1"/>
        <end position="285"/>
    </location>
</feature>
<feature type="binding site" evidence="1">
    <location>
        <begin position="166"/>
        <end position="168"/>
    </location>
    <ligand>
        <name>NADP(+)</name>
        <dbReference type="ChEBI" id="CHEBI:58349"/>
    </ligand>
</feature>
<feature type="binding site" evidence="1">
    <location>
        <position position="232"/>
    </location>
    <ligand>
        <name>NADP(+)</name>
        <dbReference type="ChEBI" id="CHEBI:58349"/>
    </ligand>
</feature>
<name>FOLD_ACTSZ</name>
<gene>
    <name evidence="1" type="primary">folD</name>
    <name type="ordered locus">Asuc_0763</name>
</gene>
<organism>
    <name type="scientific">Actinobacillus succinogenes (strain ATCC 55618 / DSM 22257 / CCUG 43843 / 130Z)</name>
    <dbReference type="NCBI Taxonomy" id="339671"/>
    <lineage>
        <taxon>Bacteria</taxon>
        <taxon>Pseudomonadati</taxon>
        <taxon>Pseudomonadota</taxon>
        <taxon>Gammaproteobacteria</taxon>
        <taxon>Pasteurellales</taxon>
        <taxon>Pasteurellaceae</taxon>
        <taxon>Actinobacillus</taxon>
    </lineage>
</organism>
<keyword id="KW-0028">Amino-acid biosynthesis</keyword>
<keyword id="KW-0368">Histidine biosynthesis</keyword>
<keyword id="KW-0378">Hydrolase</keyword>
<keyword id="KW-0486">Methionine biosynthesis</keyword>
<keyword id="KW-0511">Multifunctional enzyme</keyword>
<keyword id="KW-0521">NADP</keyword>
<keyword id="KW-0554">One-carbon metabolism</keyword>
<keyword id="KW-0560">Oxidoreductase</keyword>
<keyword id="KW-0658">Purine biosynthesis</keyword>
<keyword id="KW-1185">Reference proteome</keyword>
<dbReference type="EC" id="1.5.1.5" evidence="1"/>
<dbReference type="EC" id="3.5.4.9" evidence="1"/>
<dbReference type="EMBL" id="CP000746">
    <property type="protein sequence ID" value="ABR74135.1"/>
    <property type="molecule type" value="Genomic_DNA"/>
</dbReference>
<dbReference type="RefSeq" id="WP_012072513.1">
    <property type="nucleotide sequence ID" value="NC_009655.1"/>
</dbReference>
<dbReference type="SMR" id="A6VMD8"/>
<dbReference type="STRING" id="339671.Asuc_0763"/>
<dbReference type="KEGG" id="asu:Asuc_0763"/>
<dbReference type="eggNOG" id="COG0190">
    <property type="taxonomic scope" value="Bacteria"/>
</dbReference>
<dbReference type="HOGENOM" id="CLU_034045_2_1_6"/>
<dbReference type="OrthoDB" id="9803580at2"/>
<dbReference type="UniPathway" id="UPA00193"/>
<dbReference type="Proteomes" id="UP000001114">
    <property type="component" value="Chromosome"/>
</dbReference>
<dbReference type="GO" id="GO:0005829">
    <property type="term" value="C:cytosol"/>
    <property type="evidence" value="ECO:0007669"/>
    <property type="project" value="TreeGrafter"/>
</dbReference>
<dbReference type="GO" id="GO:0004477">
    <property type="term" value="F:methenyltetrahydrofolate cyclohydrolase activity"/>
    <property type="evidence" value="ECO:0007669"/>
    <property type="project" value="UniProtKB-UniRule"/>
</dbReference>
<dbReference type="GO" id="GO:0004488">
    <property type="term" value="F:methylenetetrahydrofolate dehydrogenase (NADP+) activity"/>
    <property type="evidence" value="ECO:0007669"/>
    <property type="project" value="UniProtKB-UniRule"/>
</dbReference>
<dbReference type="GO" id="GO:0000105">
    <property type="term" value="P:L-histidine biosynthetic process"/>
    <property type="evidence" value="ECO:0007669"/>
    <property type="project" value="UniProtKB-KW"/>
</dbReference>
<dbReference type="GO" id="GO:0009086">
    <property type="term" value="P:methionine biosynthetic process"/>
    <property type="evidence" value="ECO:0007669"/>
    <property type="project" value="UniProtKB-KW"/>
</dbReference>
<dbReference type="GO" id="GO:0006164">
    <property type="term" value="P:purine nucleotide biosynthetic process"/>
    <property type="evidence" value="ECO:0007669"/>
    <property type="project" value="UniProtKB-KW"/>
</dbReference>
<dbReference type="GO" id="GO:0035999">
    <property type="term" value="P:tetrahydrofolate interconversion"/>
    <property type="evidence" value="ECO:0007669"/>
    <property type="project" value="UniProtKB-UniRule"/>
</dbReference>
<dbReference type="CDD" id="cd01080">
    <property type="entry name" value="NAD_bind_m-THF_DH_Cyclohyd"/>
    <property type="match status" value="1"/>
</dbReference>
<dbReference type="FunFam" id="3.40.50.10860:FF:000001">
    <property type="entry name" value="Bifunctional protein FolD"/>
    <property type="match status" value="1"/>
</dbReference>
<dbReference type="FunFam" id="3.40.50.720:FF:000006">
    <property type="entry name" value="Bifunctional protein FolD"/>
    <property type="match status" value="1"/>
</dbReference>
<dbReference type="Gene3D" id="3.40.50.10860">
    <property type="entry name" value="Leucine Dehydrogenase, chain A, domain 1"/>
    <property type="match status" value="1"/>
</dbReference>
<dbReference type="Gene3D" id="3.40.50.720">
    <property type="entry name" value="NAD(P)-binding Rossmann-like Domain"/>
    <property type="match status" value="1"/>
</dbReference>
<dbReference type="HAMAP" id="MF_01576">
    <property type="entry name" value="THF_DHG_CYH"/>
    <property type="match status" value="1"/>
</dbReference>
<dbReference type="InterPro" id="IPR046346">
    <property type="entry name" value="Aminoacid_DH-like_N_sf"/>
</dbReference>
<dbReference type="InterPro" id="IPR036291">
    <property type="entry name" value="NAD(P)-bd_dom_sf"/>
</dbReference>
<dbReference type="InterPro" id="IPR000672">
    <property type="entry name" value="THF_DH/CycHdrlase"/>
</dbReference>
<dbReference type="InterPro" id="IPR020630">
    <property type="entry name" value="THF_DH/CycHdrlase_cat_dom"/>
</dbReference>
<dbReference type="InterPro" id="IPR020867">
    <property type="entry name" value="THF_DH/CycHdrlase_CS"/>
</dbReference>
<dbReference type="InterPro" id="IPR020631">
    <property type="entry name" value="THF_DH/CycHdrlase_NAD-bd_dom"/>
</dbReference>
<dbReference type="NCBIfam" id="NF008058">
    <property type="entry name" value="PRK10792.1"/>
    <property type="match status" value="1"/>
</dbReference>
<dbReference type="NCBIfam" id="NF010783">
    <property type="entry name" value="PRK14186.1"/>
    <property type="match status" value="1"/>
</dbReference>
<dbReference type="PANTHER" id="PTHR48099:SF5">
    <property type="entry name" value="C-1-TETRAHYDROFOLATE SYNTHASE, CYTOPLASMIC"/>
    <property type="match status" value="1"/>
</dbReference>
<dbReference type="PANTHER" id="PTHR48099">
    <property type="entry name" value="C-1-TETRAHYDROFOLATE SYNTHASE, CYTOPLASMIC-RELATED"/>
    <property type="match status" value="1"/>
</dbReference>
<dbReference type="Pfam" id="PF00763">
    <property type="entry name" value="THF_DHG_CYH"/>
    <property type="match status" value="1"/>
</dbReference>
<dbReference type="Pfam" id="PF02882">
    <property type="entry name" value="THF_DHG_CYH_C"/>
    <property type="match status" value="1"/>
</dbReference>
<dbReference type="PRINTS" id="PR00085">
    <property type="entry name" value="THFDHDRGNASE"/>
</dbReference>
<dbReference type="SUPFAM" id="SSF53223">
    <property type="entry name" value="Aminoacid dehydrogenase-like, N-terminal domain"/>
    <property type="match status" value="1"/>
</dbReference>
<dbReference type="SUPFAM" id="SSF51735">
    <property type="entry name" value="NAD(P)-binding Rossmann-fold domains"/>
    <property type="match status" value="1"/>
</dbReference>
<dbReference type="PROSITE" id="PS00766">
    <property type="entry name" value="THF_DHG_CYH_1"/>
    <property type="match status" value="1"/>
</dbReference>
<dbReference type="PROSITE" id="PS00767">
    <property type="entry name" value="THF_DHG_CYH_2"/>
    <property type="match status" value="1"/>
</dbReference>
<accession>A6VMD8</accession>
<protein>
    <recommendedName>
        <fullName evidence="1">Bifunctional protein FolD</fullName>
    </recommendedName>
    <domain>
        <recommendedName>
            <fullName evidence="1">Methylenetetrahydrofolate dehydrogenase</fullName>
            <ecNumber evidence="1">1.5.1.5</ecNumber>
        </recommendedName>
    </domain>
    <domain>
        <recommendedName>
            <fullName evidence="1">Methenyltetrahydrofolate cyclohydrolase</fullName>
            <ecNumber evidence="1">3.5.4.9</ecNumber>
        </recommendedName>
    </domain>
</protein>
<sequence length="285" mass="30800">MAVQVISGTELAKKTKSEVAGQIRRYISLGRRVPGLAVILVGSDPASQVYVGSKRKSCAEIGIDSKSYDLPETTTEAELLSIIDDLNRNPNVDGILVQLPLPKHIDSTKVIERIAPNKDVDGFHPYNVGRLCQRIPTLRACTPYGIMKLLETTGQDLHGLHAVIVGASNIVGRPMAMELLLAGCTVTVTHRFTRDLEEHVRRADILVVAVGKAEFINGDWIKPGATVIDVGINRGEDGKLRGDVQYAKAAEKAAFITPVPGGVGPMTVAMLMVNTLTAYERHFNA</sequence>
<proteinExistence type="inferred from homology"/>
<reference key="1">
    <citation type="journal article" date="2010" name="BMC Genomics">
        <title>A genomic perspective on the potential of Actinobacillus succinogenes for industrial succinate production.</title>
        <authorList>
            <person name="McKinlay J.B."/>
            <person name="Laivenieks M."/>
            <person name="Schindler B.D."/>
            <person name="McKinlay A.A."/>
            <person name="Siddaramappa S."/>
            <person name="Challacombe J.F."/>
            <person name="Lowry S.R."/>
            <person name="Clum A."/>
            <person name="Lapidus A.L."/>
            <person name="Burkhart K.B."/>
            <person name="Harkins V."/>
            <person name="Vieille C."/>
        </authorList>
    </citation>
    <scope>NUCLEOTIDE SEQUENCE [LARGE SCALE GENOMIC DNA]</scope>
    <source>
        <strain>ATCC 55618 / DSM 22257 / CCUG 43843 / 130Z</strain>
    </source>
</reference>
<comment type="function">
    <text evidence="1">Catalyzes the oxidation of 5,10-methylenetetrahydrofolate to 5,10-methenyltetrahydrofolate and then the hydrolysis of 5,10-methenyltetrahydrofolate to 10-formyltetrahydrofolate.</text>
</comment>
<comment type="catalytic activity">
    <reaction evidence="1">
        <text>(6R)-5,10-methylene-5,6,7,8-tetrahydrofolate + NADP(+) = (6R)-5,10-methenyltetrahydrofolate + NADPH</text>
        <dbReference type="Rhea" id="RHEA:22812"/>
        <dbReference type="ChEBI" id="CHEBI:15636"/>
        <dbReference type="ChEBI" id="CHEBI:57455"/>
        <dbReference type="ChEBI" id="CHEBI:57783"/>
        <dbReference type="ChEBI" id="CHEBI:58349"/>
        <dbReference type="EC" id="1.5.1.5"/>
    </reaction>
</comment>
<comment type="catalytic activity">
    <reaction evidence="1">
        <text>(6R)-5,10-methenyltetrahydrofolate + H2O = (6R)-10-formyltetrahydrofolate + H(+)</text>
        <dbReference type="Rhea" id="RHEA:23700"/>
        <dbReference type="ChEBI" id="CHEBI:15377"/>
        <dbReference type="ChEBI" id="CHEBI:15378"/>
        <dbReference type="ChEBI" id="CHEBI:57455"/>
        <dbReference type="ChEBI" id="CHEBI:195366"/>
        <dbReference type="EC" id="3.5.4.9"/>
    </reaction>
</comment>
<comment type="pathway">
    <text evidence="1">One-carbon metabolism; tetrahydrofolate interconversion.</text>
</comment>
<comment type="subunit">
    <text evidence="1">Homodimer.</text>
</comment>
<comment type="similarity">
    <text evidence="1">Belongs to the tetrahydrofolate dehydrogenase/cyclohydrolase family.</text>
</comment>
<evidence type="ECO:0000255" key="1">
    <source>
        <dbReference type="HAMAP-Rule" id="MF_01576"/>
    </source>
</evidence>